<accession>Q9C6B3</accession>
<accession>Q9C5S7</accession>
<proteinExistence type="evidence at protein level"/>
<name>GCA2_ARATH</name>
<protein>
    <recommendedName>
        <fullName>Gamma carbonic anhydrase 2, mitochondrial</fullName>
        <shortName>AtCA2</shortName>
        <shortName>GAMMA CA2</shortName>
        <ecNumber>4.2.1.-</ecNumber>
    </recommendedName>
    <alternativeName>
        <fullName>Transcription factor APFI</fullName>
    </alternativeName>
</protein>
<gene>
    <name type="primary">GAMMACA2</name>
    <name type="synonym">APFI</name>
    <name type="ordered locus">At1g47260</name>
    <name type="ORF">F8G22.2</name>
</gene>
<keyword id="KW-0002">3D-structure</keyword>
<keyword id="KW-0456">Lyase</keyword>
<keyword id="KW-0472">Membrane</keyword>
<keyword id="KW-0479">Metal-binding</keyword>
<keyword id="KW-0496">Mitochondrion</keyword>
<keyword id="KW-1185">Reference proteome</keyword>
<keyword id="KW-0809">Transit peptide</keyword>
<keyword id="KW-0862">Zinc</keyword>
<dbReference type="EC" id="4.2.1.-"/>
<dbReference type="EMBL" id="AF249876">
    <property type="protein sequence ID" value="AAK28403.1"/>
    <property type="molecule type" value="mRNA"/>
</dbReference>
<dbReference type="EMBL" id="AC079677">
    <property type="protein sequence ID" value="AAG52641.1"/>
    <property type="molecule type" value="Genomic_DNA"/>
</dbReference>
<dbReference type="EMBL" id="CP002684">
    <property type="protein sequence ID" value="AEE32144.1"/>
    <property type="molecule type" value="Genomic_DNA"/>
</dbReference>
<dbReference type="EMBL" id="AY045979">
    <property type="protein sequence ID" value="AAK76653.1"/>
    <property type="molecule type" value="mRNA"/>
</dbReference>
<dbReference type="EMBL" id="AY113936">
    <property type="protein sequence ID" value="AAM44984.1"/>
    <property type="molecule type" value="mRNA"/>
</dbReference>
<dbReference type="PIR" id="D96513">
    <property type="entry name" value="D96513"/>
</dbReference>
<dbReference type="RefSeq" id="NP_175159.1">
    <property type="nucleotide sequence ID" value="NM_103620.4"/>
</dbReference>
<dbReference type="PDB" id="7AQQ">
    <property type="method" value="EM"/>
    <property type="resolution" value="3.06 A"/>
    <property type="chains" value="y=1-278"/>
</dbReference>
<dbReference type="PDB" id="7AR7">
    <property type="method" value="EM"/>
    <property type="resolution" value="3.72 A"/>
    <property type="chains" value="y=2-269"/>
</dbReference>
<dbReference type="PDB" id="7AR8">
    <property type="method" value="EM"/>
    <property type="resolution" value="3.53 A"/>
    <property type="chains" value="y=1-278"/>
</dbReference>
<dbReference type="PDB" id="7ARB">
    <property type="method" value="EM"/>
    <property type="resolution" value="3.41 A"/>
    <property type="chains" value="y=1-278"/>
</dbReference>
<dbReference type="PDB" id="8BEF">
    <property type="method" value="EM"/>
    <property type="resolution" value="2.13 A"/>
    <property type="chains" value="y=1-278"/>
</dbReference>
<dbReference type="PDB" id="8BPX">
    <property type="method" value="EM"/>
    <property type="resolution" value="2.09 A"/>
    <property type="chains" value="y=1-278"/>
</dbReference>
<dbReference type="PDB" id="8BQ5">
    <property type="method" value="EM"/>
    <property type="resolution" value="2.73 A"/>
    <property type="chains" value="y=1-278"/>
</dbReference>
<dbReference type="PDB" id="8BQ6">
    <property type="method" value="EM"/>
    <property type="resolution" value="2.80 A"/>
    <property type="chains" value="y=1-278"/>
</dbReference>
<dbReference type="PDBsum" id="7AQQ"/>
<dbReference type="PDBsum" id="7AR7"/>
<dbReference type="PDBsum" id="7AR8"/>
<dbReference type="PDBsum" id="7ARB"/>
<dbReference type="PDBsum" id="8BEF"/>
<dbReference type="PDBsum" id="8BPX"/>
<dbReference type="PDBsum" id="8BQ5"/>
<dbReference type="PDBsum" id="8BQ6"/>
<dbReference type="EMDB" id="EMD-11872"/>
<dbReference type="EMDB" id="EMD-11875"/>
<dbReference type="EMDB" id="EMD-11876"/>
<dbReference type="EMDB" id="EMD-11878"/>
<dbReference type="EMDB" id="EMD-16000"/>
<dbReference type="EMDB" id="EMD-16168"/>
<dbReference type="EMDB" id="EMD-16171"/>
<dbReference type="EMDB" id="EMD-16172"/>
<dbReference type="SMR" id="Q9C6B3"/>
<dbReference type="BioGRID" id="26354">
    <property type="interactions" value="60"/>
</dbReference>
<dbReference type="FunCoup" id="Q9C6B3">
    <property type="interactions" value="1060"/>
</dbReference>
<dbReference type="IntAct" id="Q9C6B3">
    <property type="interactions" value="64"/>
</dbReference>
<dbReference type="MINT" id="Q9C6B3"/>
<dbReference type="STRING" id="3702.Q9C6B3"/>
<dbReference type="PaxDb" id="3702-AT1G47260.1"/>
<dbReference type="ProteomicsDB" id="221934"/>
<dbReference type="EnsemblPlants" id="AT1G47260.1">
    <property type="protein sequence ID" value="AT1G47260.1"/>
    <property type="gene ID" value="AT1G47260"/>
</dbReference>
<dbReference type="GeneID" id="841129"/>
<dbReference type="Gramene" id="AT1G47260.1">
    <property type="protein sequence ID" value="AT1G47260.1"/>
    <property type="gene ID" value="AT1G47260"/>
</dbReference>
<dbReference type="KEGG" id="ath:AT1G47260"/>
<dbReference type="Araport" id="AT1G47260"/>
<dbReference type="TAIR" id="AT1G47260">
    <property type="gene designation" value="GAMMA CA2"/>
</dbReference>
<dbReference type="eggNOG" id="ENOG502QTES">
    <property type="taxonomic scope" value="Eukaryota"/>
</dbReference>
<dbReference type="HOGENOM" id="CLU_064827_0_0_1"/>
<dbReference type="InParanoid" id="Q9C6B3"/>
<dbReference type="OMA" id="ANAIVMK"/>
<dbReference type="OrthoDB" id="25818at2759"/>
<dbReference type="PhylomeDB" id="Q9C6B3"/>
<dbReference type="BioCyc" id="ARA:AT1G47260-MONOMER"/>
<dbReference type="BioCyc" id="MetaCyc:AT1G47260-MONOMER"/>
<dbReference type="BRENDA" id="4.2.1.1">
    <property type="organism ID" value="399"/>
</dbReference>
<dbReference type="PRO" id="PR:Q9C6B3"/>
<dbReference type="Proteomes" id="UP000006548">
    <property type="component" value="Chromosome 1"/>
</dbReference>
<dbReference type="ExpressionAtlas" id="Q9C6B3">
    <property type="expression patterns" value="baseline and differential"/>
</dbReference>
<dbReference type="GO" id="GO:0031966">
    <property type="term" value="C:mitochondrial membrane"/>
    <property type="evidence" value="ECO:0000314"/>
    <property type="project" value="TAIR"/>
</dbReference>
<dbReference type="GO" id="GO:0005739">
    <property type="term" value="C:mitochondrion"/>
    <property type="evidence" value="ECO:0000314"/>
    <property type="project" value="TAIR"/>
</dbReference>
<dbReference type="GO" id="GO:0005634">
    <property type="term" value="C:nucleus"/>
    <property type="evidence" value="ECO:0007005"/>
    <property type="project" value="TAIR"/>
</dbReference>
<dbReference type="GO" id="GO:0045271">
    <property type="term" value="C:respiratory chain complex I"/>
    <property type="evidence" value="ECO:0000314"/>
    <property type="project" value="CACAO"/>
</dbReference>
<dbReference type="GO" id="GO:0004089">
    <property type="term" value="F:carbonate dehydratase activity"/>
    <property type="evidence" value="ECO:0000250"/>
    <property type="project" value="TAIR"/>
</dbReference>
<dbReference type="GO" id="GO:0042802">
    <property type="term" value="F:identical protein binding"/>
    <property type="evidence" value="ECO:0000353"/>
    <property type="project" value="IntAct"/>
</dbReference>
<dbReference type="GO" id="GO:0046872">
    <property type="term" value="F:metal ion binding"/>
    <property type="evidence" value="ECO:0007669"/>
    <property type="project" value="UniProtKB-KW"/>
</dbReference>
<dbReference type="GO" id="GO:0009901">
    <property type="term" value="P:anther dehiscence"/>
    <property type="evidence" value="ECO:0000315"/>
    <property type="project" value="TAIR"/>
</dbReference>
<dbReference type="GO" id="GO:0009853">
    <property type="term" value="P:photorespiration"/>
    <property type="evidence" value="ECO:0000304"/>
    <property type="project" value="TAIR"/>
</dbReference>
<dbReference type="GO" id="GO:0070207">
    <property type="term" value="P:protein homotrimerization"/>
    <property type="evidence" value="ECO:0000314"/>
    <property type="project" value="UniProtKB"/>
</dbReference>
<dbReference type="GO" id="GO:2000377">
    <property type="term" value="P:regulation of reactive oxygen species metabolic process"/>
    <property type="evidence" value="ECO:0000315"/>
    <property type="project" value="TAIR"/>
</dbReference>
<dbReference type="CDD" id="cd04645">
    <property type="entry name" value="LbH_gamma_CA_like"/>
    <property type="match status" value="1"/>
</dbReference>
<dbReference type="FunFam" id="2.160.10.10:FF:000012">
    <property type="entry name" value="Carnitine operon protein CaiE"/>
    <property type="match status" value="1"/>
</dbReference>
<dbReference type="Gene3D" id="2.160.10.10">
    <property type="entry name" value="Hexapeptide repeat proteins"/>
    <property type="match status" value="1"/>
</dbReference>
<dbReference type="InterPro" id="IPR001451">
    <property type="entry name" value="Hexapep"/>
</dbReference>
<dbReference type="InterPro" id="IPR047324">
    <property type="entry name" value="LbH_gamma_CA-like"/>
</dbReference>
<dbReference type="InterPro" id="IPR050484">
    <property type="entry name" value="Transf_Hexapept/Carb_Anhydrase"/>
</dbReference>
<dbReference type="InterPro" id="IPR011004">
    <property type="entry name" value="Trimer_LpxA-like_sf"/>
</dbReference>
<dbReference type="PANTHER" id="PTHR13061">
    <property type="entry name" value="DYNACTIN SUBUNIT P25"/>
    <property type="match status" value="1"/>
</dbReference>
<dbReference type="PANTHER" id="PTHR13061:SF54">
    <property type="entry name" value="GAMMA CARBONIC ANHYDRASE 2, MITOCHONDRIAL"/>
    <property type="match status" value="1"/>
</dbReference>
<dbReference type="Pfam" id="PF00132">
    <property type="entry name" value="Hexapep"/>
    <property type="match status" value="1"/>
</dbReference>
<dbReference type="SUPFAM" id="SSF51161">
    <property type="entry name" value="Trimeric LpxA-like enzymes"/>
    <property type="match status" value="1"/>
</dbReference>
<reference key="1">
    <citation type="submission" date="2000-03" db="EMBL/GenBank/DDBJ databases">
        <title>APFI: A novel transcription factor involved in the anther specific expression of nuclear-encoded mitochondrial complex I genes.</title>
        <authorList>
            <person name="Zabaleta E."/>
            <person name="Perales M."/>
            <person name="Lohrmann J."/>
            <person name="Walter M."/>
            <person name="Brennicke A."/>
            <person name="Harter K."/>
            <person name="Kudla J."/>
        </authorList>
    </citation>
    <scope>NUCLEOTIDE SEQUENCE [MRNA]</scope>
</reference>
<reference key="2">
    <citation type="journal article" date="2000" name="Nature">
        <title>Sequence and analysis of chromosome 1 of the plant Arabidopsis thaliana.</title>
        <authorList>
            <person name="Theologis A."/>
            <person name="Ecker J.R."/>
            <person name="Palm C.J."/>
            <person name="Federspiel N.A."/>
            <person name="Kaul S."/>
            <person name="White O."/>
            <person name="Alonso J."/>
            <person name="Altafi H."/>
            <person name="Araujo R."/>
            <person name="Bowman C.L."/>
            <person name="Brooks S.Y."/>
            <person name="Buehler E."/>
            <person name="Chan A."/>
            <person name="Chao Q."/>
            <person name="Chen H."/>
            <person name="Cheuk R.F."/>
            <person name="Chin C.W."/>
            <person name="Chung M.K."/>
            <person name="Conn L."/>
            <person name="Conway A.B."/>
            <person name="Conway A.R."/>
            <person name="Creasy T.H."/>
            <person name="Dewar K."/>
            <person name="Dunn P."/>
            <person name="Etgu P."/>
            <person name="Feldblyum T.V."/>
            <person name="Feng J.-D."/>
            <person name="Fong B."/>
            <person name="Fujii C.Y."/>
            <person name="Gill J.E."/>
            <person name="Goldsmith A.D."/>
            <person name="Haas B."/>
            <person name="Hansen N.F."/>
            <person name="Hughes B."/>
            <person name="Huizar L."/>
            <person name="Hunter J.L."/>
            <person name="Jenkins J."/>
            <person name="Johnson-Hopson C."/>
            <person name="Khan S."/>
            <person name="Khaykin E."/>
            <person name="Kim C.J."/>
            <person name="Koo H.L."/>
            <person name="Kremenetskaia I."/>
            <person name="Kurtz D.B."/>
            <person name="Kwan A."/>
            <person name="Lam B."/>
            <person name="Langin-Hooper S."/>
            <person name="Lee A."/>
            <person name="Lee J.M."/>
            <person name="Lenz C.A."/>
            <person name="Li J.H."/>
            <person name="Li Y.-P."/>
            <person name="Lin X."/>
            <person name="Liu S.X."/>
            <person name="Liu Z.A."/>
            <person name="Luros J.S."/>
            <person name="Maiti R."/>
            <person name="Marziali A."/>
            <person name="Militscher J."/>
            <person name="Miranda M."/>
            <person name="Nguyen M."/>
            <person name="Nierman W.C."/>
            <person name="Osborne B.I."/>
            <person name="Pai G."/>
            <person name="Peterson J."/>
            <person name="Pham P.K."/>
            <person name="Rizzo M."/>
            <person name="Rooney T."/>
            <person name="Rowley D."/>
            <person name="Sakano H."/>
            <person name="Salzberg S.L."/>
            <person name="Schwartz J.R."/>
            <person name="Shinn P."/>
            <person name="Southwick A.M."/>
            <person name="Sun H."/>
            <person name="Tallon L.J."/>
            <person name="Tambunga G."/>
            <person name="Toriumi M.J."/>
            <person name="Town C.D."/>
            <person name="Utterback T."/>
            <person name="Van Aken S."/>
            <person name="Vaysberg M."/>
            <person name="Vysotskaia V.S."/>
            <person name="Walker M."/>
            <person name="Wu D."/>
            <person name="Yu G."/>
            <person name="Fraser C.M."/>
            <person name="Venter J.C."/>
            <person name="Davis R.W."/>
        </authorList>
    </citation>
    <scope>NUCLEOTIDE SEQUENCE [LARGE SCALE GENOMIC DNA]</scope>
    <source>
        <strain>cv. Columbia</strain>
    </source>
</reference>
<reference key="3">
    <citation type="journal article" date="2017" name="Plant J.">
        <title>Araport11: a complete reannotation of the Arabidopsis thaliana reference genome.</title>
        <authorList>
            <person name="Cheng C.Y."/>
            <person name="Krishnakumar V."/>
            <person name="Chan A.P."/>
            <person name="Thibaud-Nissen F."/>
            <person name="Schobel S."/>
            <person name="Town C.D."/>
        </authorList>
    </citation>
    <scope>GENOME REANNOTATION</scope>
    <source>
        <strain>cv. Columbia</strain>
    </source>
</reference>
<reference key="4">
    <citation type="journal article" date="2003" name="Science">
        <title>Empirical analysis of transcriptional activity in the Arabidopsis genome.</title>
        <authorList>
            <person name="Yamada K."/>
            <person name="Lim J."/>
            <person name="Dale J.M."/>
            <person name="Chen H."/>
            <person name="Shinn P."/>
            <person name="Palm C.J."/>
            <person name="Southwick A.M."/>
            <person name="Wu H.C."/>
            <person name="Kim C.J."/>
            <person name="Nguyen M."/>
            <person name="Pham P.K."/>
            <person name="Cheuk R.F."/>
            <person name="Karlin-Newmann G."/>
            <person name="Liu S.X."/>
            <person name="Lam B."/>
            <person name="Sakano H."/>
            <person name="Wu T."/>
            <person name="Yu G."/>
            <person name="Miranda M."/>
            <person name="Quach H.L."/>
            <person name="Tripp M."/>
            <person name="Chang C.H."/>
            <person name="Lee J.M."/>
            <person name="Toriumi M.J."/>
            <person name="Chan M.M."/>
            <person name="Tang C.C."/>
            <person name="Onodera C.S."/>
            <person name="Deng J.M."/>
            <person name="Akiyama K."/>
            <person name="Ansari Y."/>
            <person name="Arakawa T."/>
            <person name="Banh J."/>
            <person name="Banno F."/>
            <person name="Bowser L."/>
            <person name="Brooks S.Y."/>
            <person name="Carninci P."/>
            <person name="Chao Q."/>
            <person name="Choy N."/>
            <person name="Enju A."/>
            <person name="Goldsmith A.D."/>
            <person name="Gurjal M."/>
            <person name="Hansen N.F."/>
            <person name="Hayashizaki Y."/>
            <person name="Johnson-Hopson C."/>
            <person name="Hsuan V.W."/>
            <person name="Iida K."/>
            <person name="Karnes M."/>
            <person name="Khan S."/>
            <person name="Koesema E."/>
            <person name="Ishida J."/>
            <person name="Jiang P.X."/>
            <person name="Jones T."/>
            <person name="Kawai J."/>
            <person name="Kamiya A."/>
            <person name="Meyers C."/>
            <person name="Nakajima M."/>
            <person name="Narusaka M."/>
            <person name="Seki M."/>
            <person name="Sakurai T."/>
            <person name="Satou M."/>
            <person name="Tamse R."/>
            <person name="Vaysberg M."/>
            <person name="Wallender E.K."/>
            <person name="Wong C."/>
            <person name="Yamamura Y."/>
            <person name="Yuan S."/>
            <person name="Shinozaki K."/>
            <person name="Davis R.W."/>
            <person name="Theologis A."/>
            <person name="Ecker J.R."/>
        </authorList>
    </citation>
    <scope>NUCLEOTIDE SEQUENCE [LARGE SCALE MRNA]</scope>
    <source>
        <strain>cv. Columbia</strain>
    </source>
</reference>
<reference key="5">
    <citation type="journal article" date="2003" name="Biochim. Biophys. Acta">
        <title>Mitochondrial complex I from Arabidopsis and rice: orthologs of mammalian and fungal components coupled with plant-specific subunits.</title>
        <authorList>
            <person name="Heazlewood J.L."/>
            <person name="Howell K.A."/>
            <person name="Millar A.H."/>
        </authorList>
    </citation>
    <scope>SUBUNIT</scope>
    <scope>IDENTIFICATION BY MASS SPECTROMETRY</scope>
    <scope>GENE FAMILY</scope>
    <source>
        <strain>cv. Landsberg erecta</strain>
    </source>
</reference>
<reference key="6">
    <citation type="journal article" date="2004" name="Plant Cell">
        <title>Experimental analysis of the Arabidopsis mitochondrial proteome highlights signaling and regulatory components, provides assessment of targeting prediction programs, and indicates plant-specific mitochondrial proteins.</title>
        <authorList>
            <person name="Heazlewood J.L."/>
            <person name="Tonti-Filippini J.S."/>
            <person name="Gout A.M."/>
            <person name="Day D.A."/>
            <person name="Whelan J."/>
            <person name="Millar A.H."/>
        </authorList>
    </citation>
    <scope>IDENTIFICATION BY MASS SPECTROMETRY</scope>
    <scope>SUBCELLULAR LOCATION [LARGE SCALE ANALYSIS]</scope>
    <source>
        <strain>cv. Landsberg erecta</strain>
    </source>
</reference>
<reference key="7">
    <citation type="journal article" date="2004" name="Plant Mol. Biol.">
        <title>Gamma carbonic anhydrases in plant mitochondria.</title>
        <authorList>
            <person name="Parisi G."/>
            <person name="Perales M."/>
            <person name="Fornasari M.S."/>
            <person name="Colaneri A."/>
            <person name="Gonzalez-Schain N."/>
            <person name="Gomez-Casati D."/>
            <person name="Zimmermann S."/>
            <person name="Brennicke A."/>
            <person name="Araya A."/>
            <person name="Ferry J.G."/>
            <person name="Echave J."/>
            <person name="Zabaleta E."/>
        </authorList>
    </citation>
    <scope>SUBCELLULAR LOCATION</scope>
    <scope>GENE FAMILY</scope>
    <scope>NOMENCLATURE</scope>
</reference>
<reference key="8">
    <citation type="journal article" date="2004" name="Plant Mol. Biol.">
        <title>Gamma carbonic anhydrase like complex interact with plant mitochondrial complex I.</title>
        <authorList>
            <person name="Perales M."/>
            <person name="Parisi G."/>
            <person name="Fornasari M.S."/>
            <person name="Colaneri A."/>
            <person name="Villarreal F."/>
            <person name="Gonzalez-Schain N."/>
            <person name="Echave J."/>
            <person name="Gomez-Casati D."/>
            <person name="Braun H.-P."/>
            <person name="Araya A."/>
            <person name="Zabaleta E."/>
        </authorList>
    </citation>
    <scope>INTERACTION WITH GAMMACAL1 AND GAMMACAL2</scope>
</reference>
<reference key="9">
    <citation type="journal article" date="2005" name="J. Mol. Biol.">
        <title>Disruption of a nuclear gene encoding a mitochondrial gamma carbonic anhydrase reduces complex I and supercomplex I + III2 levels and alters mitochondrial physiology in Arabidopsis.</title>
        <authorList>
            <person name="Perales M."/>
            <person name="Eubel H."/>
            <person name="Heinemeyer J."/>
            <person name="Colaneri A."/>
            <person name="Zabaleta E."/>
            <person name="Braun H.-P."/>
        </authorList>
    </citation>
    <scope>FUNCTION</scope>
    <scope>DISRUPTION PHENOTYPE</scope>
    <scope>SUBUNIT</scope>
</reference>
<reference key="10">
    <citation type="journal article" date="2006" name="J. Biol. Chem.">
        <title>Carbonic anhydrase subunits form a matrix-exposed domain attached to the membrane arm of mitochondrial complex I in plants.</title>
        <authorList>
            <person name="Sunderhaus S."/>
            <person name="Dudkina N.V."/>
            <person name="Jaensch L."/>
            <person name="Klodmann J."/>
            <person name="Heinemeyer J."/>
            <person name="Perales M."/>
            <person name="Zabaleta E."/>
            <person name="Boekema E.J."/>
            <person name="Braun H.-P."/>
        </authorList>
    </citation>
    <scope>SUBCELLULAR LOCATION</scope>
    <scope>SUBUNIT</scope>
    <scope>IDENTIFICATION BY MASS SPECTROMETRY</scope>
</reference>
<reference key="11">
    <citation type="journal article" date="2009" name="FEBS Lett.">
        <title>Recombinant plant gamma carbonic anhydrase homotrimers bind inorganic carbon.</title>
        <authorList>
            <person name="Martin V."/>
            <person name="Villarreal F."/>
            <person name="Miras I."/>
            <person name="Navaza A."/>
            <person name="Haouz A."/>
            <person name="Gonzalez-Lebrero R.M."/>
            <person name="Kaufman S.B."/>
            <person name="Zabaleta E."/>
        </authorList>
    </citation>
    <scope>FUNCTION</scope>
    <scope>SUBUNIT</scope>
</reference>
<reference key="12">
    <citation type="journal article" date="2009" name="Plant Mol. Biol.">
        <title>Ectopic expression of mitochondrial gamma carbonic anhydrase 2 causes male sterility by anther indehiscence.</title>
        <authorList>
            <person name="Villarreal F."/>
            <person name="Martin V."/>
            <person name="Colaneri A."/>
            <person name="Gonzalez-Schain N."/>
            <person name="Perales M."/>
            <person name="Martin M."/>
            <person name="Lombardo C."/>
            <person name="Braun H.-P."/>
            <person name="Bartoli C."/>
            <person name="Zabaleta E."/>
        </authorList>
    </citation>
    <scope>FUNCTION</scope>
    <scope>TISSUE SPECIFICITY</scope>
    <scope>DEVELOPMENTAL STAGE</scope>
    <source>
        <strain>cv. Columbia</strain>
    </source>
</reference>
<comment type="function">
    <text evidence="7 9 10">Enzyme involved in the catabolism of H(2)CO(3) but that does not mediates the reversible hydration of carbon dioxide (PubMed:19808034). Mediates complex I assembly in mitochondria and respiration. Binds HCO(3)-. Required for male fertility during anther development and dehiscence to regulate the secondary thickenings of the endothecial cell wall, probably by modulating H(2)O(2)-dependent lignin polymerization.</text>
</comment>
<comment type="cofactor">
    <cofactor evidence="1">
        <name>Zn(2+)</name>
        <dbReference type="ChEBI" id="CHEBI:29105"/>
    </cofactor>
</comment>
<comment type="subunit">
    <text evidence="3 6 7 8 10">Homotrimer. Component of the mitochondrial oxidoreductase respiratory chain complex I; element of the extra matrix-exposed domain, which is attached to the membrane arm of this complex. Interacts with GAMMACAL1 and GAMMACAL2.</text>
</comment>
<comment type="interaction">
    <interactant intactId="EBI-531995">
        <id>Q9C6B3</id>
    </interactant>
    <interactant intactId="EBI-531995">
        <id>Q9C6B3</id>
        <label>GAMMACA2</label>
    </interactant>
    <organismsDiffer>false</organismsDiffer>
    <experiments>3</experiments>
</comment>
<comment type="interaction">
    <interactant intactId="EBI-531995">
        <id>Q9C6B3</id>
    </interactant>
    <interactant intactId="EBI-532008">
        <id>Q9FMV1</id>
        <label>GAMMACAL1</label>
    </interactant>
    <organismsDiffer>false</organismsDiffer>
    <experiments>2</experiments>
</comment>
<comment type="interaction">
    <interactant intactId="EBI-531995">
        <id>Q9C6B3</id>
    </interactant>
    <interactant intactId="EBI-532001">
        <id>Q9SMN1</id>
        <label>GAMMACAL2</label>
    </interactant>
    <organismsDiffer>false</organismsDiffer>
    <experiments>3</experiments>
</comment>
<comment type="subcellular location">
    <subcellularLocation>
        <location evidence="4 5 8">Mitochondrion membrane</location>
        <topology evidence="4 5 8">Peripheral membrane protein</topology>
        <orientation evidence="4 5 8">Matrix side</orientation>
    </subcellularLocation>
    <text evidence="8">Probably integral to the membrane.</text>
</comment>
<comment type="tissue specificity">
    <text evidence="9">Constitutively expressed in roots and leaves, with higher levels in flowers, particularly in tapetal tissue of anthers, inflorescence (IM) and floral meristems (FM).</text>
</comment>
<comment type="developmental stage">
    <text evidence="9">During flower development, first expressed in anthers and later in seeds.</text>
</comment>
<comment type="disruption phenotype">
    <text evidence="7">Reduced levels of complex I and supercomplex I + III(2) in mitochondrion. Reduced growth rates and respiration of suspension cell culture.</text>
</comment>
<comment type="similarity">
    <text evidence="11">Belongs to the gamma-class carbonic anhydrase family.</text>
</comment>
<organism>
    <name type="scientific">Arabidopsis thaliana</name>
    <name type="common">Mouse-ear cress</name>
    <dbReference type="NCBI Taxonomy" id="3702"/>
    <lineage>
        <taxon>Eukaryota</taxon>
        <taxon>Viridiplantae</taxon>
        <taxon>Streptophyta</taxon>
        <taxon>Embryophyta</taxon>
        <taxon>Tracheophyta</taxon>
        <taxon>Spermatophyta</taxon>
        <taxon>Magnoliopsida</taxon>
        <taxon>eudicotyledons</taxon>
        <taxon>Gunneridae</taxon>
        <taxon>Pentapetalae</taxon>
        <taxon>rosids</taxon>
        <taxon>malvids</taxon>
        <taxon>Brassicales</taxon>
        <taxon>Brassicaceae</taxon>
        <taxon>Camelineae</taxon>
        <taxon>Arabidopsis</taxon>
    </lineage>
</organism>
<evidence type="ECO:0000250" key="1"/>
<evidence type="ECO:0000255" key="2"/>
<evidence type="ECO:0000269" key="3">
    <source>
    </source>
</evidence>
<evidence type="ECO:0000269" key="4">
    <source>
    </source>
</evidence>
<evidence type="ECO:0000269" key="5">
    <source>
    </source>
</evidence>
<evidence type="ECO:0000269" key="6">
    <source>
    </source>
</evidence>
<evidence type="ECO:0000269" key="7">
    <source>
    </source>
</evidence>
<evidence type="ECO:0000269" key="8">
    <source>
    </source>
</evidence>
<evidence type="ECO:0000269" key="9">
    <source>
    </source>
</evidence>
<evidence type="ECO:0000269" key="10">
    <source>
    </source>
</evidence>
<evidence type="ECO:0000305" key="11"/>
<evidence type="ECO:0007829" key="12">
    <source>
        <dbReference type="PDB" id="7AQQ"/>
    </source>
</evidence>
<evidence type="ECO:0007829" key="13">
    <source>
        <dbReference type="PDB" id="7ARB"/>
    </source>
</evidence>
<evidence type="ECO:0007829" key="14">
    <source>
        <dbReference type="PDB" id="8BEF"/>
    </source>
</evidence>
<feature type="transit peptide" description="Mitochondrion" evidence="2">
    <location>
        <begin position="1"/>
        <end position="43"/>
    </location>
</feature>
<feature type="chain" id="PRO_0000417611" description="Gamma carbonic anhydrase 2, mitochondrial">
    <location>
        <begin position="44"/>
        <end position="278"/>
    </location>
</feature>
<feature type="binding site" evidence="1">
    <location>
        <begin position="86"/>
        <end position="88"/>
    </location>
    <ligand>
        <name>substrate</name>
    </ligand>
</feature>
<feature type="binding site" evidence="1">
    <location>
        <begin position="101"/>
        <end position="102"/>
    </location>
    <ligand>
        <name>substrate</name>
    </ligand>
</feature>
<feature type="binding site" evidence="1">
    <location>
        <position position="107"/>
    </location>
    <ligand>
        <name>Zn(2+)</name>
        <dbReference type="ChEBI" id="CHEBI:29105"/>
    </ligand>
</feature>
<feature type="binding site" evidence="1">
    <location>
        <position position="130"/>
    </location>
    <ligand>
        <name>Zn(2+)</name>
        <dbReference type="ChEBI" id="CHEBI:29105"/>
    </ligand>
</feature>
<feature type="binding site" evidence="1">
    <location>
        <position position="135"/>
    </location>
    <ligand>
        <name>Zn(2+)</name>
        <dbReference type="ChEBI" id="CHEBI:29105"/>
    </ligand>
</feature>
<feature type="binding site" evidence="1">
    <location>
        <position position="209"/>
    </location>
    <ligand>
        <name>substrate</name>
    </ligand>
</feature>
<feature type="sequence conflict" description="In Ref. 1; AAK28403." evidence="11" ref="1">
    <original>N</original>
    <variation>T</variation>
    <location>
        <position position="112"/>
    </location>
</feature>
<feature type="sequence conflict" description="In Ref. 1; AAK28403." evidence="11" ref="1">
    <original>K</original>
    <variation>E</variation>
    <location>
        <position position="191"/>
    </location>
</feature>
<feature type="helix" evidence="14">
    <location>
        <begin position="2"/>
        <end position="29"/>
    </location>
</feature>
<feature type="turn" evidence="14">
    <location>
        <begin position="30"/>
        <end position="32"/>
    </location>
</feature>
<feature type="strand" evidence="14">
    <location>
        <begin position="44"/>
        <end position="46"/>
    </location>
</feature>
<feature type="strand" evidence="12">
    <location>
        <begin position="48"/>
        <end position="50"/>
    </location>
</feature>
<feature type="strand" evidence="14">
    <location>
        <begin position="66"/>
        <end position="73"/>
    </location>
</feature>
<feature type="strand" evidence="14">
    <location>
        <begin position="84"/>
        <end position="94"/>
    </location>
</feature>
<feature type="strand" evidence="14">
    <location>
        <begin position="105"/>
        <end position="107"/>
    </location>
</feature>
<feature type="strand" evidence="14">
    <location>
        <begin position="113"/>
        <end position="115"/>
    </location>
</feature>
<feature type="strand" evidence="14">
    <location>
        <begin position="120"/>
        <end position="122"/>
    </location>
</feature>
<feature type="strand" evidence="14">
    <location>
        <begin position="133"/>
        <end position="136"/>
    </location>
</feature>
<feature type="strand" evidence="14">
    <location>
        <begin position="179"/>
        <end position="182"/>
    </location>
</feature>
<feature type="turn" evidence="14">
    <location>
        <begin position="183"/>
        <end position="186"/>
    </location>
</feature>
<feature type="strand" evidence="14">
    <location>
        <begin position="187"/>
        <end position="191"/>
    </location>
</feature>
<feature type="helix" evidence="14">
    <location>
        <begin position="194"/>
        <end position="218"/>
    </location>
</feature>
<feature type="helix" evidence="14">
    <location>
        <begin position="222"/>
        <end position="234"/>
    </location>
</feature>
<feature type="helix" evidence="14">
    <location>
        <begin position="240"/>
        <end position="246"/>
    </location>
</feature>
<feature type="helix" evidence="14">
    <location>
        <begin position="254"/>
        <end position="256"/>
    </location>
</feature>
<feature type="helix" evidence="14">
    <location>
        <begin position="260"/>
        <end position="262"/>
    </location>
</feature>
<feature type="strand" evidence="13">
    <location>
        <begin position="263"/>
        <end position="265"/>
    </location>
</feature>
<sequence length="278" mass="30065">MGTLGRAIYTVGNWIRGTGQALDRVGSLLQGSHRIEEHLSRHRTLMNVFDKSPLVDKDVFVAPSASVIGDVQIGKGSSIWYGCVLRGDVNNISVGSGTNIQDNTLVHVAKTNISGKVLPTLIGDNVTVGHSAVIHGCTVEDDAFVGMGATLLDGVVVEKHAMVAAGSLVKQNTRIPSGEVWGGNPAKFMRKLTDEEIVYISQSAKNYINLAQIHASENSKSFEQIEVERALRKKYARKDEDYDSMLGITRETPPELILPDNVLPGGKPVAKVPSTQYF</sequence>